<dbReference type="EC" id="2.7.4.8" evidence="1"/>
<dbReference type="EMBL" id="AE016826">
    <property type="protein sequence ID" value="AAO27097.1"/>
    <property type="molecule type" value="Genomic_DNA"/>
</dbReference>
<dbReference type="RefSeq" id="WP_011091498.1">
    <property type="nucleotide sequence ID" value="NC_004545.1"/>
</dbReference>
<dbReference type="SMR" id="Q89AC8"/>
<dbReference type="STRING" id="224915.bbp_385"/>
<dbReference type="KEGG" id="bab:bbp_385"/>
<dbReference type="eggNOG" id="COG0194">
    <property type="taxonomic scope" value="Bacteria"/>
</dbReference>
<dbReference type="HOGENOM" id="CLU_001715_1_0_6"/>
<dbReference type="OrthoDB" id="9808150at2"/>
<dbReference type="Proteomes" id="UP000000601">
    <property type="component" value="Chromosome"/>
</dbReference>
<dbReference type="GO" id="GO:0005829">
    <property type="term" value="C:cytosol"/>
    <property type="evidence" value="ECO:0007669"/>
    <property type="project" value="TreeGrafter"/>
</dbReference>
<dbReference type="GO" id="GO:0005524">
    <property type="term" value="F:ATP binding"/>
    <property type="evidence" value="ECO:0007669"/>
    <property type="project" value="UniProtKB-UniRule"/>
</dbReference>
<dbReference type="GO" id="GO:0004385">
    <property type="term" value="F:guanylate kinase activity"/>
    <property type="evidence" value="ECO:0007669"/>
    <property type="project" value="UniProtKB-UniRule"/>
</dbReference>
<dbReference type="CDD" id="cd00071">
    <property type="entry name" value="GMPK"/>
    <property type="match status" value="1"/>
</dbReference>
<dbReference type="FunFam" id="3.30.63.10:FF:000005">
    <property type="entry name" value="Guanylate kinase"/>
    <property type="match status" value="1"/>
</dbReference>
<dbReference type="FunFam" id="3.40.50.300:FF:000084">
    <property type="entry name" value="Guanylate kinase"/>
    <property type="match status" value="1"/>
</dbReference>
<dbReference type="Gene3D" id="3.30.63.10">
    <property type="entry name" value="Guanylate Kinase phosphate binding domain"/>
    <property type="match status" value="1"/>
</dbReference>
<dbReference type="Gene3D" id="3.40.50.300">
    <property type="entry name" value="P-loop containing nucleotide triphosphate hydrolases"/>
    <property type="match status" value="1"/>
</dbReference>
<dbReference type="HAMAP" id="MF_00328">
    <property type="entry name" value="Guanylate_kinase"/>
    <property type="match status" value="1"/>
</dbReference>
<dbReference type="InterPro" id="IPR008145">
    <property type="entry name" value="GK/Ca_channel_bsu"/>
</dbReference>
<dbReference type="InterPro" id="IPR008144">
    <property type="entry name" value="Guanylate_kin-like_dom"/>
</dbReference>
<dbReference type="InterPro" id="IPR017665">
    <property type="entry name" value="Guanylate_kinase"/>
</dbReference>
<dbReference type="InterPro" id="IPR020590">
    <property type="entry name" value="Guanylate_kinase_CS"/>
</dbReference>
<dbReference type="InterPro" id="IPR027417">
    <property type="entry name" value="P-loop_NTPase"/>
</dbReference>
<dbReference type="NCBIfam" id="TIGR03263">
    <property type="entry name" value="guanyl_kin"/>
    <property type="match status" value="1"/>
</dbReference>
<dbReference type="PANTHER" id="PTHR23117:SF13">
    <property type="entry name" value="GUANYLATE KINASE"/>
    <property type="match status" value="1"/>
</dbReference>
<dbReference type="PANTHER" id="PTHR23117">
    <property type="entry name" value="GUANYLATE KINASE-RELATED"/>
    <property type="match status" value="1"/>
</dbReference>
<dbReference type="Pfam" id="PF00625">
    <property type="entry name" value="Guanylate_kin"/>
    <property type="match status" value="1"/>
</dbReference>
<dbReference type="SMART" id="SM00072">
    <property type="entry name" value="GuKc"/>
    <property type="match status" value="1"/>
</dbReference>
<dbReference type="SUPFAM" id="SSF52540">
    <property type="entry name" value="P-loop containing nucleoside triphosphate hydrolases"/>
    <property type="match status" value="1"/>
</dbReference>
<dbReference type="PROSITE" id="PS00856">
    <property type="entry name" value="GUANYLATE_KINASE_1"/>
    <property type="match status" value="1"/>
</dbReference>
<dbReference type="PROSITE" id="PS50052">
    <property type="entry name" value="GUANYLATE_KINASE_2"/>
    <property type="match status" value="1"/>
</dbReference>
<feature type="chain" id="PRO_0000170512" description="Guanylate kinase">
    <location>
        <begin position="1"/>
        <end position="207"/>
    </location>
</feature>
<feature type="domain" description="Guanylate kinase-like" evidence="1">
    <location>
        <begin position="4"/>
        <end position="184"/>
    </location>
</feature>
<feature type="binding site" evidence="1">
    <location>
        <begin position="11"/>
        <end position="18"/>
    </location>
    <ligand>
        <name>ATP</name>
        <dbReference type="ChEBI" id="CHEBI:30616"/>
    </ligand>
</feature>
<sequence>MAKGLLFIVSAPSGTGKSSLIQALVNTHPLYSIKVSVSHTTRIIRPGECHGKHYYFISNTEFQNMIDKEEFLEYAKVFNNYYGTSKKQINYGLSTGTDVFLDIDWQGARQIRNKLPESKSIFILPPSKEELYRRLCKRGQDSDIIIKKRMNQAVSEMKHYIDYDYLIINDNFNLAVSDLYKIIRVAHLSIKHQIQRNNLLIRNLLNE</sequence>
<evidence type="ECO:0000255" key="1">
    <source>
        <dbReference type="HAMAP-Rule" id="MF_00328"/>
    </source>
</evidence>
<keyword id="KW-0067">ATP-binding</keyword>
<keyword id="KW-0963">Cytoplasm</keyword>
<keyword id="KW-0418">Kinase</keyword>
<keyword id="KW-0547">Nucleotide-binding</keyword>
<keyword id="KW-1185">Reference proteome</keyword>
<keyword id="KW-0808">Transferase</keyword>
<reference key="1">
    <citation type="journal article" date="2003" name="Proc. Natl. Acad. Sci. U.S.A.">
        <title>Reductive genome evolution in Buchnera aphidicola.</title>
        <authorList>
            <person name="van Ham R.C.H.J."/>
            <person name="Kamerbeek J."/>
            <person name="Palacios C."/>
            <person name="Rausell C."/>
            <person name="Abascal F."/>
            <person name="Bastolla U."/>
            <person name="Fernandez J.M."/>
            <person name="Jimenez L."/>
            <person name="Postigo M."/>
            <person name="Silva F.J."/>
            <person name="Tamames J."/>
            <person name="Viguera E."/>
            <person name="Latorre A."/>
            <person name="Valencia A."/>
            <person name="Moran F."/>
            <person name="Moya A."/>
        </authorList>
    </citation>
    <scope>NUCLEOTIDE SEQUENCE [LARGE SCALE GENOMIC DNA]</scope>
    <source>
        <strain>Bp</strain>
    </source>
</reference>
<organism>
    <name type="scientific">Buchnera aphidicola subsp. Baizongia pistaciae (strain Bp)</name>
    <dbReference type="NCBI Taxonomy" id="224915"/>
    <lineage>
        <taxon>Bacteria</taxon>
        <taxon>Pseudomonadati</taxon>
        <taxon>Pseudomonadota</taxon>
        <taxon>Gammaproteobacteria</taxon>
        <taxon>Enterobacterales</taxon>
        <taxon>Erwiniaceae</taxon>
        <taxon>Buchnera</taxon>
    </lineage>
</organism>
<comment type="function">
    <text evidence="1">Essential for recycling GMP and indirectly, cGMP.</text>
</comment>
<comment type="catalytic activity">
    <reaction evidence="1">
        <text>GMP + ATP = GDP + ADP</text>
        <dbReference type="Rhea" id="RHEA:20780"/>
        <dbReference type="ChEBI" id="CHEBI:30616"/>
        <dbReference type="ChEBI" id="CHEBI:58115"/>
        <dbReference type="ChEBI" id="CHEBI:58189"/>
        <dbReference type="ChEBI" id="CHEBI:456216"/>
        <dbReference type="EC" id="2.7.4.8"/>
    </reaction>
</comment>
<comment type="subcellular location">
    <subcellularLocation>
        <location evidence="1">Cytoplasm</location>
    </subcellularLocation>
</comment>
<comment type="similarity">
    <text evidence="1">Belongs to the guanylate kinase family.</text>
</comment>
<protein>
    <recommendedName>
        <fullName evidence="1">Guanylate kinase</fullName>
        <ecNumber evidence="1">2.7.4.8</ecNumber>
    </recommendedName>
    <alternativeName>
        <fullName evidence="1">GMP kinase</fullName>
    </alternativeName>
</protein>
<proteinExistence type="inferred from homology"/>
<accession>Q89AC8</accession>
<gene>
    <name evidence="1" type="primary">gmk</name>
    <name type="ordered locus">bbp_385</name>
</gene>
<name>KGUA_BUCBP</name>